<sequence length="245" mass="27301">MKIIFNADDFGISPGAVYGILESYKRGVVKSTTLLANSPAFDLAVEVAKENPGLDIGAHLTLTFGSPVLQGLETLTDDDGRFRRNYTSLENGLADVDMNEVERELTAQIEKILDAGITISHFDTHHSIEPLIYPVQHKLAEKYGVSIRRHSDVSDFGAIKTPDLFATEFYADGVSFETIKKLVQKHIGTNDVVEVMTHPAFIDETLREISSYVEPRIKEVSILTSRELQAYLGQQEVEIISFRDL</sequence>
<feature type="chain" id="PRO_1000214102" description="Carbohydrate deacetylase">
    <location>
        <begin position="1"/>
        <end position="245"/>
    </location>
</feature>
<feature type="binding site" evidence="1">
    <location>
        <position position="59"/>
    </location>
    <ligand>
        <name>Mg(2+)</name>
        <dbReference type="ChEBI" id="CHEBI:18420"/>
    </ligand>
</feature>
<feature type="binding site" evidence="1">
    <location>
        <position position="125"/>
    </location>
    <ligand>
        <name>Mg(2+)</name>
        <dbReference type="ChEBI" id="CHEBI:18420"/>
    </ligand>
</feature>
<comment type="function">
    <text evidence="1">Probably catalyzes the deacetylation of acetylated carbohydrates an important step in the degradation of oligosaccharides.</text>
</comment>
<comment type="cofactor">
    <cofactor evidence="1">
        <name>Mg(2+)</name>
        <dbReference type="ChEBI" id="CHEBI:18420"/>
    </cofactor>
</comment>
<comment type="subunit">
    <text evidence="1">Homodimer.</text>
</comment>
<comment type="similarity">
    <text evidence="1">Belongs to the YdjC deacetylase family.</text>
</comment>
<name>YDJC_LISMC</name>
<reference key="1">
    <citation type="journal article" date="2012" name="BMC Genomics">
        <title>Comparative genomics and transcriptomics of lineages I, II, and III strains of Listeria monocytogenes.</title>
        <authorList>
            <person name="Hain T."/>
            <person name="Ghai R."/>
            <person name="Billion A."/>
            <person name="Kuenne C.T."/>
            <person name="Steinweg C."/>
            <person name="Izar B."/>
            <person name="Mohamed W."/>
            <person name="Mraheil M."/>
            <person name="Domann E."/>
            <person name="Schaffrath S."/>
            <person name="Karst U."/>
            <person name="Goesmann A."/>
            <person name="Oehm S."/>
            <person name="Puhler A."/>
            <person name="Merkl R."/>
            <person name="Vorwerk S."/>
            <person name="Glaser P."/>
            <person name="Garrido P."/>
            <person name="Rusniok C."/>
            <person name="Buchrieser C."/>
            <person name="Goebel W."/>
            <person name="Chakraborty T."/>
        </authorList>
    </citation>
    <scope>NUCLEOTIDE SEQUENCE [LARGE SCALE GENOMIC DNA]</scope>
    <source>
        <strain>CLIP80459</strain>
    </source>
</reference>
<protein>
    <recommendedName>
        <fullName evidence="1">Carbohydrate deacetylase</fullName>
        <ecNumber evidence="1">3.5.1.-</ecNumber>
    </recommendedName>
</protein>
<organism>
    <name type="scientific">Listeria monocytogenes serotype 4b (strain CLIP80459)</name>
    <dbReference type="NCBI Taxonomy" id="568819"/>
    <lineage>
        <taxon>Bacteria</taxon>
        <taxon>Bacillati</taxon>
        <taxon>Bacillota</taxon>
        <taxon>Bacilli</taxon>
        <taxon>Bacillales</taxon>
        <taxon>Listeriaceae</taxon>
        <taxon>Listeria</taxon>
    </lineage>
</organism>
<evidence type="ECO:0000255" key="1">
    <source>
        <dbReference type="HAMAP-Rule" id="MF_01246"/>
    </source>
</evidence>
<gene>
    <name type="ordered locus">Lm4b_00188</name>
</gene>
<keyword id="KW-0119">Carbohydrate metabolism</keyword>
<keyword id="KW-0378">Hydrolase</keyword>
<keyword id="KW-0460">Magnesium</keyword>
<keyword id="KW-0479">Metal-binding</keyword>
<accession>C1KYC4</accession>
<proteinExistence type="inferred from homology"/>
<dbReference type="EC" id="3.5.1.-" evidence="1"/>
<dbReference type="EMBL" id="FM242711">
    <property type="protein sequence ID" value="CAS03979.1"/>
    <property type="molecule type" value="Genomic_DNA"/>
</dbReference>
<dbReference type="SMR" id="C1KYC4"/>
<dbReference type="KEGG" id="lmc:Lm4b_00188"/>
<dbReference type="HOGENOM" id="CLU_064244_4_0_9"/>
<dbReference type="GO" id="GO:0019213">
    <property type="term" value="F:deacetylase activity"/>
    <property type="evidence" value="ECO:0007669"/>
    <property type="project" value="TreeGrafter"/>
</dbReference>
<dbReference type="GO" id="GO:0016811">
    <property type="term" value="F:hydrolase activity, acting on carbon-nitrogen (but not peptide) bonds, in linear amides"/>
    <property type="evidence" value="ECO:0007669"/>
    <property type="project" value="UniProtKB-UniRule"/>
</dbReference>
<dbReference type="GO" id="GO:0046872">
    <property type="term" value="F:metal ion binding"/>
    <property type="evidence" value="ECO:0007669"/>
    <property type="project" value="UniProtKB-KW"/>
</dbReference>
<dbReference type="GO" id="GO:0000272">
    <property type="term" value="P:polysaccharide catabolic process"/>
    <property type="evidence" value="ECO:0007669"/>
    <property type="project" value="InterPro"/>
</dbReference>
<dbReference type="CDD" id="cd10803">
    <property type="entry name" value="YdjC_EF3048_like"/>
    <property type="match status" value="1"/>
</dbReference>
<dbReference type="FunFam" id="3.20.20.370:FF:000010">
    <property type="entry name" value="Carbohydrate deacetylase"/>
    <property type="match status" value="1"/>
</dbReference>
<dbReference type="Gene3D" id="3.20.20.370">
    <property type="entry name" value="Glycoside hydrolase/deacetylase"/>
    <property type="match status" value="1"/>
</dbReference>
<dbReference type="HAMAP" id="MF_01246">
    <property type="entry name" value="COD"/>
    <property type="match status" value="1"/>
</dbReference>
<dbReference type="InterPro" id="IPR022948">
    <property type="entry name" value="COD_ChbG_bac"/>
</dbReference>
<dbReference type="InterPro" id="IPR011330">
    <property type="entry name" value="Glyco_hydro/deAcase_b/a-brl"/>
</dbReference>
<dbReference type="InterPro" id="IPR006879">
    <property type="entry name" value="YdjC-like"/>
</dbReference>
<dbReference type="NCBIfam" id="NF002559">
    <property type="entry name" value="PRK02134.1"/>
    <property type="match status" value="1"/>
</dbReference>
<dbReference type="PANTHER" id="PTHR31609:SF1">
    <property type="entry name" value="CARBOHYDRATE DEACETYLASE"/>
    <property type="match status" value="1"/>
</dbReference>
<dbReference type="PANTHER" id="PTHR31609">
    <property type="entry name" value="YDJC DEACETYLASE FAMILY MEMBER"/>
    <property type="match status" value="1"/>
</dbReference>
<dbReference type="Pfam" id="PF04794">
    <property type="entry name" value="YdjC"/>
    <property type="match status" value="1"/>
</dbReference>
<dbReference type="SUPFAM" id="SSF88713">
    <property type="entry name" value="Glycoside hydrolase/deacetylase"/>
    <property type="match status" value="1"/>
</dbReference>